<protein>
    <recommendedName>
        <fullName evidence="1">Cytochrome b6-f complex iron-sulfur subunit</fullName>
        <ecNumber evidence="1">7.1.1.6</ecNumber>
    </recommendedName>
    <alternativeName>
        <fullName evidence="1">Plastohydroquinone:plastocyanin oxidoreductase iron-sulfur protein</fullName>
        <shortName evidence="1">ISP</shortName>
        <shortName evidence="1">RISP</shortName>
    </alternativeName>
    <alternativeName>
        <fullName evidence="1">Rieske iron-sulfur protein</fullName>
    </alternativeName>
</protein>
<dbReference type="EC" id="7.1.1.6" evidence="1"/>
<dbReference type="EMBL" id="CP000576">
    <property type="protein sequence ID" value="ABO17110.1"/>
    <property type="molecule type" value="Genomic_DNA"/>
</dbReference>
<dbReference type="RefSeq" id="WP_011862485.1">
    <property type="nucleotide sequence ID" value="NC_009091.1"/>
</dbReference>
<dbReference type="SMR" id="A3PBI5"/>
<dbReference type="STRING" id="167546.P9301_04871"/>
<dbReference type="KEGG" id="pmg:P9301_04871"/>
<dbReference type="eggNOG" id="COG0723">
    <property type="taxonomic scope" value="Bacteria"/>
</dbReference>
<dbReference type="HOGENOM" id="CLU_055690_8_0_3"/>
<dbReference type="OrthoDB" id="9767869at2"/>
<dbReference type="Proteomes" id="UP000001430">
    <property type="component" value="Chromosome"/>
</dbReference>
<dbReference type="GO" id="GO:0031676">
    <property type="term" value="C:plasma membrane-derived thylakoid membrane"/>
    <property type="evidence" value="ECO:0007669"/>
    <property type="project" value="UniProtKB-SubCell"/>
</dbReference>
<dbReference type="GO" id="GO:0051537">
    <property type="term" value="F:2 iron, 2 sulfur cluster binding"/>
    <property type="evidence" value="ECO:0007669"/>
    <property type="project" value="UniProtKB-KW"/>
</dbReference>
<dbReference type="GO" id="GO:0045158">
    <property type="term" value="F:electron transporter, transferring electrons within cytochrome b6/f complex of photosystem II activity"/>
    <property type="evidence" value="ECO:0007669"/>
    <property type="project" value="UniProtKB-UniRule"/>
</dbReference>
<dbReference type="GO" id="GO:0046872">
    <property type="term" value="F:metal ion binding"/>
    <property type="evidence" value="ECO:0007669"/>
    <property type="project" value="UniProtKB-KW"/>
</dbReference>
<dbReference type="GO" id="GO:0004497">
    <property type="term" value="F:monooxygenase activity"/>
    <property type="evidence" value="ECO:0007669"/>
    <property type="project" value="UniProtKB-ARBA"/>
</dbReference>
<dbReference type="GO" id="GO:0016705">
    <property type="term" value="F:oxidoreductase activity, acting on paired donors, with incorporation or reduction of molecular oxygen"/>
    <property type="evidence" value="ECO:0007669"/>
    <property type="project" value="UniProtKB-ARBA"/>
</dbReference>
<dbReference type="GO" id="GO:0009496">
    <property type="term" value="F:plastoquinol--plastocyanin reductase activity"/>
    <property type="evidence" value="ECO:0007669"/>
    <property type="project" value="UniProtKB-UniRule"/>
</dbReference>
<dbReference type="GO" id="GO:0015979">
    <property type="term" value="P:photosynthesis"/>
    <property type="evidence" value="ECO:0007669"/>
    <property type="project" value="UniProtKB-UniRule"/>
</dbReference>
<dbReference type="CDD" id="cd03471">
    <property type="entry name" value="Rieske_cytochrome_b6f"/>
    <property type="match status" value="1"/>
</dbReference>
<dbReference type="FunFam" id="2.102.10.10:FF:000007">
    <property type="entry name" value="Cytochrome b6-f complex iron-sulfur subunit"/>
    <property type="match status" value="1"/>
</dbReference>
<dbReference type="Gene3D" id="2.102.10.10">
    <property type="entry name" value="Rieske [2Fe-2S] iron-sulphur domain"/>
    <property type="match status" value="1"/>
</dbReference>
<dbReference type="Gene3D" id="1.20.5.700">
    <property type="entry name" value="Single helix bin"/>
    <property type="match status" value="1"/>
</dbReference>
<dbReference type="HAMAP" id="MF_01335">
    <property type="entry name" value="Cytb6_f_Rieske"/>
    <property type="match status" value="1"/>
</dbReference>
<dbReference type="InterPro" id="IPR023960">
    <property type="entry name" value="Cyt_b6_f_Rieske"/>
</dbReference>
<dbReference type="InterPro" id="IPR017941">
    <property type="entry name" value="Rieske_2Fe-2S"/>
</dbReference>
<dbReference type="InterPro" id="IPR036922">
    <property type="entry name" value="Rieske_2Fe-2S_sf"/>
</dbReference>
<dbReference type="InterPro" id="IPR014349">
    <property type="entry name" value="Rieske_Fe-S_prot"/>
</dbReference>
<dbReference type="InterPro" id="IPR005805">
    <property type="entry name" value="Rieske_Fe-S_prot_C"/>
</dbReference>
<dbReference type="InterPro" id="IPR006311">
    <property type="entry name" value="TAT_signal"/>
</dbReference>
<dbReference type="NCBIfam" id="NF045928">
    <property type="entry name" value="Cytb6fFeSPetC"/>
    <property type="match status" value="1"/>
</dbReference>
<dbReference type="NCBIfam" id="NF010001">
    <property type="entry name" value="PRK13474.1"/>
    <property type="match status" value="1"/>
</dbReference>
<dbReference type="PANTHER" id="PTHR10134">
    <property type="entry name" value="CYTOCHROME B-C1 COMPLEX SUBUNIT RIESKE, MITOCHONDRIAL"/>
    <property type="match status" value="1"/>
</dbReference>
<dbReference type="Pfam" id="PF00355">
    <property type="entry name" value="Rieske"/>
    <property type="match status" value="1"/>
</dbReference>
<dbReference type="Pfam" id="PF25471">
    <property type="entry name" value="TM_PetC"/>
    <property type="match status" value="1"/>
</dbReference>
<dbReference type="PRINTS" id="PR00162">
    <property type="entry name" value="RIESKE"/>
</dbReference>
<dbReference type="SUPFAM" id="SSF50022">
    <property type="entry name" value="ISP domain"/>
    <property type="match status" value="1"/>
</dbReference>
<dbReference type="PROSITE" id="PS51296">
    <property type="entry name" value="RIESKE"/>
    <property type="match status" value="1"/>
</dbReference>
<dbReference type="PROSITE" id="PS51318">
    <property type="entry name" value="TAT"/>
    <property type="match status" value="1"/>
</dbReference>
<reference key="1">
    <citation type="journal article" date="2007" name="PLoS Genet.">
        <title>Patterns and implications of gene gain and loss in the evolution of Prochlorococcus.</title>
        <authorList>
            <person name="Kettler G.C."/>
            <person name="Martiny A.C."/>
            <person name="Huang K."/>
            <person name="Zucker J."/>
            <person name="Coleman M.L."/>
            <person name="Rodrigue S."/>
            <person name="Chen F."/>
            <person name="Lapidus A."/>
            <person name="Ferriera S."/>
            <person name="Johnson J."/>
            <person name="Steglich C."/>
            <person name="Church G.M."/>
            <person name="Richardson P."/>
            <person name="Chisholm S.W."/>
        </authorList>
    </citation>
    <scope>NUCLEOTIDE SEQUENCE [LARGE SCALE GENOMIC DNA]</scope>
    <source>
        <strain>MIT 9301</strain>
    </source>
</reference>
<organism>
    <name type="scientific">Prochlorococcus marinus (strain MIT 9301)</name>
    <dbReference type="NCBI Taxonomy" id="167546"/>
    <lineage>
        <taxon>Bacteria</taxon>
        <taxon>Bacillati</taxon>
        <taxon>Cyanobacteriota</taxon>
        <taxon>Cyanophyceae</taxon>
        <taxon>Synechococcales</taxon>
        <taxon>Prochlorococcaceae</taxon>
        <taxon>Prochlorococcus</taxon>
    </lineage>
</organism>
<comment type="function">
    <text evidence="1">Component of the cytochrome b6-f complex, which mediates electron transfer between photosystem II (PSII) and photosystem I (PSI), cyclic electron flow around PSI, and state transitions.</text>
</comment>
<comment type="catalytic activity">
    <reaction evidence="1">
        <text>2 oxidized [plastocyanin] + a plastoquinol + 2 H(+)(in) = 2 reduced [plastocyanin] + a plastoquinone + 4 H(+)(out)</text>
        <dbReference type="Rhea" id="RHEA:22148"/>
        <dbReference type="Rhea" id="RHEA-COMP:9561"/>
        <dbReference type="Rhea" id="RHEA-COMP:9562"/>
        <dbReference type="Rhea" id="RHEA-COMP:10039"/>
        <dbReference type="Rhea" id="RHEA-COMP:10040"/>
        <dbReference type="ChEBI" id="CHEBI:15378"/>
        <dbReference type="ChEBI" id="CHEBI:17757"/>
        <dbReference type="ChEBI" id="CHEBI:29036"/>
        <dbReference type="ChEBI" id="CHEBI:49552"/>
        <dbReference type="ChEBI" id="CHEBI:62192"/>
        <dbReference type="EC" id="7.1.1.6"/>
    </reaction>
</comment>
<comment type="cofactor">
    <cofactor evidence="1">
        <name>[2Fe-2S] cluster</name>
        <dbReference type="ChEBI" id="CHEBI:190135"/>
    </cofactor>
    <text evidence="1">Binds 1 [2Fe-2S] cluster per subunit.</text>
</comment>
<comment type="subunit">
    <text evidence="1">The 4 large subunits of the cytochrome b6-f complex are cytochrome b6, subunit IV (17 kDa polypeptide, PetD), cytochrome f and the Rieske protein, while the 4 small subunits are PetG, PetL, PetM and PetN. The complex functions as a dimer.</text>
</comment>
<comment type="subcellular location">
    <subcellularLocation>
        <location evidence="1">Cellular thylakoid membrane</location>
        <topology evidence="1">Single-pass membrane protein</topology>
    </subcellularLocation>
    <text evidence="1">The transmembrane helix obliquely spans the membrane in one monomer, and its extrinsic C-terminal domain is part of the other monomer.</text>
</comment>
<comment type="miscellaneous">
    <text>The Rieske iron-sulfur protein is a high potential 2Fe-2S protein.</text>
</comment>
<comment type="similarity">
    <text evidence="1">Belongs to the Rieske iron-sulfur protein family.</text>
</comment>
<gene>
    <name evidence="1" type="primary">petC</name>
    <name type="ordered locus">P9301_04871</name>
</gene>
<accession>A3PBI5</accession>
<evidence type="ECO:0000255" key="1">
    <source>
        <dbReference type="HAMAP-Rule" id="MF_01335"/>
    </source>
</evidence>
<name>UCRI_PROM0</name>
<sequence length="178" mass="18980">MTQLSSNDVPSMGRRQFMNLLTFGTATGVALGALYPVANYFMPLRAGGGGGGTSAKDELGNPITKTGWLATHQAGDRSLVQGLKGDPTYLIVNEVGEIGEFGLNAICTHLGCVVPWDSGANKFICPCHGSQYDTNGKVVRGPAPLSLALAHVDIEDDAVLVKQWSETDFRTNENPWWA</sequence>
<keyword id="KW-0001">2Fe-2S</keyword>
<keyword id="KW-1015">Disulfide bond</keyword>
<keyword id="KW-0249">Electron transport</keyword>
<keyword id="KW-0408">Iron</keyword>
<keyword id="KW-0411">Iron-sulfur</keyword>
<keyword id="KW-0472">Membrane</keyword>
<keyword id="KW-0479">Metal-binding</keyword>
<keyword id="KW-1185">Reference proteome</keyword>
<keyword id="KW-0793">Thylakoid</keyword>
<keyword id="KW-1278">Translocase</keyword>
<keyword id="KW-0812">Transmembrane</keyword>
<keyword id="KW-1133">Transmembrane helix</keyword>
<keyword id="KW-0813">Transport</keyword>
<feature type="chain" id="PRO_0000298456" description="Cytochrome b6-f complex iron-sulfur subunit">
    <location>
        <begin position="1"/>
        <end position="178"/>
    </location>
</feature>
<feature type="transmembrane region" description="Helical" evidence="1">
    <location>
        <begin position="20"/>
        <end position="42"/>
    </location>
</feature>
<feature type="domain" description="Rieske" evidence="1">
    <location>
        <begin position="65"/>
        <end position="161"/>
    </location>
</feature>
<feature type="binding site" evidence="1">
    <location>
        <position position="107"/>
    </location>
    <ligand>
        <name>[2Fe-2S] cluster</name>
        <dbReference type="ChEBI" id="CHEBI:190135"/>
    </ligand>
</feature>
<feature type="binding site" evidence="1">
    <location>
        <position position="109"/>
    </location>
    <ligand>
        <name>[2Fe-2S] cluster</name>
        <dbReference type="ChEBI" id="CHEBI:190135"/>
    </ligand>
</feature>
<feature type="binding site" evidence="1">
    <location>
        <position position="125"/>
    </location>
    <ligand>
        <name>[2Fe-2S] cluster</name>
        <dbReference type="ChEBI" id="CHEBI:190135"/>
    </ligand>
</feature>
<feature type="binding site" evidence="1">
    <location>
        <position position="128"/>
    </location>
    <ligand>
        <name>[2Fe-2S] cluster</name>
        <dbReference type="ChEBI" id="CHEBI:190135"/>
    </ligand>
</feature>
<feature type="disulfide bond" evidence="1">
    <location>
        <begin position="112"/>
        <end position="127"/>
    </location>
</feature>
<proteinExistence type="inferred from homology"/>